<dbReference type="EMBL" id="CU928160">
    <property type="protein sequence ID" value="CAQ97478.1"/>
    <property type="molecule type" value="Genomic_DNA"/>
</dbReference>
<dbReference type="RefSeq" id="WP_000939738.1">
    <property type="nucleotide sequence ID" value="NC_011741.1"/>
</dbReference>
<dbReference type="SMR" id="B7M5F2"/>
<dbReference type="GeneID" id="93776858"/>
<dbReference type="KEGG" id="ecr:ECIAI1_0608"/>
<dbReference type="HOGENOM" id="CLU_114342_3_3_6"/>
<dbReference type="GO" id="GO:0005886">
    <property type="term" value="C:plasma membrane"/>
    <property type="evidence" value="ECO:0007669"/>
    <property type="project" value="UniProtKB-SubCell"/>
</dbReference>
<dbReference type="GO" id="GO:0062054">
    <property type="term" value="F:fluoride channel activity"/>
    <property type="evidence" value="ECO:0007669"/>
    <property type="project" value="UniProtKB-UniRule"/>
</dbReference>
<dbReference type="GO" id="GO:0046872">
    <property type="term" value="F:metal ion binding"/>
    <property type="evidence" value="ECO:0007669"/>
    <property type="project" value="UniProtKB-KW"/>
</dbReference>
<dbReference type="GO" id="GO:0140114">
    <property type="term" value="P:cellular detoxification of fluoride"/>
    <property type="evidence" value="ECO:0007669"/>
    <property type="project" value="UniProtKB-UniRule"/>
</dbReference>
<dbReference type="HAMAP" id="MF_00454">
    <property type="entry name" value="FluC"/>
    <property type="match status" value="1"/>
</dbReference>
<dbReference type="InterPro" id="IPR003691">
    <property type="entry name" value="FluC"/>
</dbReference>
<dbReference type="NCBIfam" id="TIGR00494">
    <property type="entry name" value="crcB"/>
    <property type="match status" value="1"/>
</dbReference>
<dbReference type="NCBIfam" id="NF010792">
    <property type="entry name" value="PRK14196.1"/>
    <property type="match status" value="1"/>
</dbReference>
<dbReference type="PANTHER" id="PTHR28259">
    <property type="entry name" value="FLUORIDE EXPORT PROTEIN 1-RELATED"/>
    <property type="match status" value="1"/>
</dbReference>
<dbReference type="PANTHER" id="PTHR28259:SF1">
    <property type="entry name" value="FLUORIDE EXPORT PROTEIN 1-RELATED"/>
    <property type="match status" value="1"/>
</dbReference>
<dbReference type="Pfam" id="PF02537">
    <property type="entry name" value="CRCB"/>
    <property type="match status" value="1"/>
</dbReference>
<name>FLUC_ECO8A</name>
<organism>
    <name type="scientific">Escherichia coli O8 (strain IAI1)</name>
    <dbReference type="NCBI Taxonomy" id="585034"/>
    <lineage>
        <taxon>Bacteria</taxon>
        <taxon>Pseudomonadati</taxon>
        <taxon>Pseudomonadota</taxon>
        <taxon>Gammaproteobacteria</taxon>
        <taxon>Enterobacterales</taxon>
        <taxon>Enterobacteriaceae</taxon>
        <taxon>Escherichia</taxon>
    </lineage>
</organism>
<comment type="function">
    <text evidence="1">Fluoride-specific ion channel. Important for reducing fluoride concentration in the cell, thus reducing its toxicity.</text>
</comment>
<comment type="catalytic activity">
    <reaction evidence="1">
        <text>fluoride(in) = fluoride(out)</text>
        <dbReference type="Rhea" id="RHEA:76159"/>
        <dbReference type="ChEBI" id="CHEBI:17051"/>
    </reaction>
    <physiologicalReaction direction="left-to-right" evidence="1">
        <dbReference type="Rhea" id="RHEA:76160"/>
    </physiologicalReaction>
</comment>
<comment type="activity regulation">
    <text evidence="1">Na(+) is not transported, but it plays an essential structural role and its presence is essential for fluoride channel function.</text>
</comment>
<comment type="subcellular location">
    <subcellularLocation>
        <location evidence="1">Cell inner membrane</location>
        <topology evidence="1">Multi-pass membrane protein</topology>
    </subcellularLocation>
</comment>
<comment type="similarity">
    <text evidence="1">Belongs to the fluoride channel Fluc/FEX (TC 1.A.43) family.</text>
</comment>
<evidence type="ECO:0000255" key="1">
    <source>
        <dbReference type="HAMAP-Rule" id="MF_00454"/>
    </source>
</evidence>
<reference key="1">
    <citation type="journal article" date="2009" name="PLoS Genet.">
        <title>Organised genome dynamics in the Escherichia coli species results in highly diverse adaptive paths.</title>
        <authorList>
            <person name="Touchon M."/>
            <person name="Hoede C."/>
            <person name="Tenaillon O."/>
            <person name="Barbe V."/>
            <person name="Baeriswyl S."/>
            <person name="Bidet P."/>
            <person name="Bingen E."/>
            <person name="Bonacorsi S."/>
            <person name="Bouchier C."/>
            <person name="Bouvet O."/>
            <person name="Calteau A."/>
            <person name="Chiapello H."/>
            <person name="Clermont O."/>
            <person name="Cruveiller S."/>
            <person name="Danchin A."/>
            <person name="Diard M."/>
            <person name="Dossat C."/>
            <person name="Karoui M.E."/>
            <person name="Frapy E."/>
            <person name="Garry L."/>
            <person name="Ghigo J.M."/>
            <person name="Gilles A.M."/>
            <person name="Johnson J."/>
            <person name="Le Bouguenec C."/>
            <person name="Lescat M."/>
            <person name="Mangenot S."/>
            <person name="Martinez-Jehanne V."/>
            <person name="Matic I."/>
            <person name="Nassif X."/>
            <person name="Oztas S."/>
            <person name="Petit M.A."/>
            <person name="Pichon C."/>
            <person name="Rouy Z."/>
            <person name="Ruf C.S."/>
            <person name="Schneider D."/>
            <person name="Tourret J."/>
            <person name="Vacherie B."/>
            <person name="Vallenet D."/>
            <person name="Medigue C."/>
            <person name="Rocha E.P.C."/>
            <person name="Denamur E."/>
        </authorList>
    </citation>
    <scope>NUCLEOTIDE SEQUENCE [LARGE SCALE GENOMIC DNA]</scope>
    <source>
        <strain>IAI1</strain>
    </source>
</reference>
<accession>B7M5F2</accession>
<feature type="chain" id="PRO_1000125124" description="Fluoride-specific ion channel FluC">
    <location>
        <begin position="1"/>
        <end position="127"/>
    </location>
</feature>
<feature type="transmembrane region" description="Helical" evidence="1">
    <location>
        <begin position="4"/>
        <end position="24"/>
    </location>
</feature>
<feature type="transmembrane region" description="Helical" evidence="1">
    <location>
        <begin position="35"/>
        <end position="55"/>
    </location>
</feature>
<feature type="transmembrane region" description="Helical" evidence="1">
    <location>
        <begin position="71"/>
        <end position="91"/>
    </location>
</feature>
<feature type="transmembrane region" description="Helical" evidence="1">
    <location>
        <begin position="103"/>
        <end position="123"/>
    </location>
</feature>
<feature type="binding site" evidence="1">
    <location>
        <position position="75"/>
    </location>
    <ligand>
        <name>Na(+)</name>
        <dbReference type="ChEBI" id="CHEBI:29101"/>
        <note>structural</note>
    </ligand>
</feature>
<feature type="binding site" evidence="1">
    <location>
        <position position="78"/>
    </location>
    <ligand>
        <name>Na(+)</name>
        <dbReference type="ChEBI" id="CHEBI:29101"/>
        <note>structural</note>
    </ligand>
</feature>
<sequence length="127" mass="13765">MLQLLLAVFIGGGTGSVARWLLSMRFNPLHQAIPLGTLAANLIGAFIIGMGFAWFSRMTNIDPVWKVLITTGFCGGLTTFSTFSAEVVFLLQEGRFGWALLNVFVNLLGSFAMTALAFWLFSASTAH</sequence>
<proteinExistence type="inferred from homology"/>
<gene>
    <name evidence="1" type="primary">fluC</name>
    <name evidence="1" type="synonym">crcB</name>
    <name type="ordered locus">ECIAI1_0608</name>
</gene>
<keyword id="KW-0997">Cell inner membrane</keyword>
<keyword id="KW-1003">Cell membrane</keyword>
<keyword id="KW-0407">Ion channel</keyword>
<keyword id="KW-0406">Ion transport</keyword>
<keyword id="KW-0472">Membrane</keyword>
<keyword id="KW-0479">Metal-binding</keyword>
<keyword id="KW-0915">Sodium</keyword>
<keyword id="KW-0812">Transmembrane</keyword>
<keyword id="KW-1133">Transmembrane helix</keyword>
<keyword id="KW-0813">Transport</keyword>
<protein>
    <recommendedName>
        <fullName evidence="1">Fluoride-specific ion channel FluC</fullName>
    </recommendedName>
</protein>